<feature type="chain" id="PRO_1000053994" description="Uridylate kinase">
    <location>
        <begin position="1"/>
        <end position="236"/>
    </location>
</feature>
<feature type="binding site" evidence="1">
    <location>
        <begin position="10"/>
        <end position="13"/>
    </location>
    <ligand>
        <name>ATP</name>
        <dbReference type="ChEBI" id="CHEBI:30616"/>
    </ligand>
</feature>
<feature type="binding site" evidence="1">
    <location>
        <position position="52"/>
    </location>
    <ligand>
        <name>UMP</name>
        <dbReference type="ChEBI" id="CHEBI:57865"/>
    </ligand>
</feature>
<feature type="binding site" evidence="1">
    <location>
        <position position="53"/>
    </location>
    <ligand>
        <name>ATP</name>
        <dbReference type="ChEBI" id="CHEBI:30616"/>
    </ligand>
</feature>
<feature type="binding site" evidence="1">
    <location>
        <position position="57"/>
    </location>
    <ligand>
        <name>ATP</name>
        <dbReference type="ChEBI" id="CHEBI:30616"/>
    </ligand>
</feature>
<feature type="binding site" evidence="1">
    <location>
        <position position="72"/>
    </location>
    <ligand>
        <name>UMP</name>
        <dbReference type="ChEBI" id="CHEBI:57865"/>
    </ligand>
</feature>
<feature type="binding site" evidence="1">
    <location>
        <begin position="133"/>
        <end position="140"/>
    </location>
    <ligand>
        <name>UMP</name>
        <dbReference type="ChEBI" id="CHEBI:57865"/>
    </ligand>
</feature>
<feature type="binding site" evidence="1">
    <location>
        <position position="160"/>
    </location>
    <ligand>
        <name>ATP</name>
        <dbReference type="ChEBI" id="CHEBI:30616"/>
    </ligand>
</feature>
<feature type="binding site" evidence="1">
    <location>
        <position position="166"/>
    </location>
    <ligand>
        <name>ATP</name>
        <dbReference type="ChEBI" id="CHEBI:30616"/>
    </ligand>
</feature>
<feature type="binding site" evidence="1">
    <location>
        <position position="169"/>
    </location>
    <ligand>
        <name>ATP</name>
        <dbReference type="ChEBI" id="CHEBI:30616"/>
    </ligand>
</feature>
<comment type="function">
    <text evidence="1">Catalyzes the reversible phosphorylation of UMP to UDP.</text>
</comment>
<comment type="catalytic activity">
    <reaction evidence="1">
        <text>UMP + ATP = UDP + ADP</text>
        <dbReference type="Rhea" id="RHEA:24400"/>
        <dbReference type="ChEBI" id="CHEBI:30616"/>
        <dbReference type="ChEBI" id="CHEBI:57865"/>
        <dbReference type="ChEBI" id="CHEBI:58223"/>
        <dbReference type="ChEBI" id="CHEBI:456216"/>
        <dbReference type="EC" id="2.7.4.22"/>
    </reaction>
</comment>
<comment type="activity regulation">
    <text evidence="1">Inhibited by UTP.</text>
</comment>
<comment type="pathway">
    <text evidence="1">Pyrimidine metabolism; CTP biosynthesis via de novo pathway; UDP from UMP (UMPK route): step 1/1.</text>
</comment>
<comment type="subunit">
    <text evidence="1">Homohexamer.</text>
</comment>
<comment type="subcellular location">
    <subcellularLocation>
        <location evidence="1">Cytoplasm</location>
    </subcellularLocation>
</comment>
<comment type="similarity">
    <text evidence="1">Belongs to the UMP kinase family.</text>
</comment>
<organism>
    <name type="scientific">Cupriavidus pinatubonensis (strain JMP 134 / LMG 1197)</name>
    <name type="common">Cupriavidus necator (strain JMP 134)</name>
    <dbReference type="NCBI Taxonomy" id="264198"/>
    <lineage>
        <taxon>Bacteria</taxon>
        <taxon>Pseudomonadati</taxon>
        <taxon>Pseudomonadota</taxon>
        <taxon>Betaproteobacteria</taxon>
        <taxon>Burkholderiales</taxon>
        <taxon>Burkholderiaceae</taxon>
        <taxon>Cupriavidus</taxon>
    </lineage>
</organism>
<name>PYRH_CUPPJ</name>
<accession>Q470D9</accession>
<sequence length="236" mass="25198">MPAYKRVLLKLSGEALMGDDAFGINRATIEGMVNDIAEIVKLGVQVAVVIGGGNIFRGVAGGAAGMDRATADYMGMLATMMNALALQDAMRHANIEGRVQSALRMDQVVEPYIRPRAIRQLEEGKVVIFAAGTGNPFFTTDTAAALRGAEIGAEIVLKATKVDGVYTADPKKDPSATRYTTITFDEAISRNLQVMDATAFALCRDQKLPIKVFSIVKPGALKRVVLGEDEGTLVHV</sequence>
<proteinExistence type="inferred from homology"/>
<dbReference type="EC" id="2.7.4.22" evidence="1"/>
<dbReference type="EMBL" id="CP000090">
    <property type="protein sequence ID" value="AAZ61244.1"/>
    <property type="molecule type" value="Genomic_DNA"/>
</dbReference>
<dbReference type="SMR" id="Q470D9"/>
<dbReference type="STRING" id="264198.Reut_A1879"/>
<dbReference type="KEGG" id="reu:Reut_A1879"/>
<dbReference type="eggNOG" id="COG0528">
    <property type="taxonomic scope" value="Bacteria"/>
</dbReference>
<dbReference type="HOGENOM" id="CLU_033861_0_0_4"/>
<dbReference type="OrthoDB" id="9807458at2"/>
<dbReference type="UniPathway" id="UPA00159">
    <property type="reaction ID" value="UER00275"/>
</dbReference>
<dbReference type="GO" id="GO:0005829">
    <property type="term" value="C:cytosol"/>
    <property type="evidence" value="ECO:0007669"/>
    <property type="project" value="TreeGrafter"/>
</dbReference>
<dbReference type="GO" id="GO:0005524">
    <property type="term" value="F:ATP binding"/>
    <property type="evidence" value="ECO:0007669"/>
    <property type="project" value="UniProtKB-KW"/>
</dbReference>
<dbReference type="GO" id="GO:0033862">
    <property type="term" value="F:UMP kinase activity"/>
    <property type="evidence" value="ECO:0007669"/>
    <property type="project" value="UniProtKB-EC"/>
</dbReference>
<dbReference type="GO" id="GO:0044210">
    <property type="term" value="P:'de novo' CTP biosynthetic process"/>
    <property type="evidence" value="ECO:0007669"/>
    <property type="project" value="UniProtKB-UniRule"/>
</dbReference>
<dbReference type="GO" id="GO:0006225">
    <property type="term" value="P:UDP biosynthetic process"/>
    <property type="evidence" value="ECO:0007669"/>
    <property type="project" value="TreeGrafter"/>
</dbReference>
<dbReference type="CDD" id="cd04254">
    <property type="entry name" value="AAK_UMPK-PyrH-Ec"/>
    <property type="match status" value="1"/>
</dbReference>
<dbReference type="FunFam" id="3.40.1160.10:FF:000001">
    <property type="entry name" value="Uridylate kinase"/>
    <property type="match status" value="1"/>
</dbReference>
<dbReference type="Gene3D" id="3.40.1160.10">
    <property type="entry name" value="Acetylglutamate kinase-like"/>
    <property type="match status" value="1"/>
</dbReference>
<dbReference type="HAMAP" id="MF_01220_B">
    <property type="entry name" value="PyrH_B"/>
    <property type="match status" value="1"/>
</dbReference>
<dbReference type="InterPro" id="IPR036393">
    <property type="entry name" value="AceGlu_kinase-like_sf"/>
</dbReference>
<dbReference type="InterPro" id="IPR001048">
    <property type="entry name" value="Asp/Glu/Uridylate_kinase"/>
</dbReference>
<dbReference type="InterPro" id="IPR011817">
    <property type="entry name" value="Uridylate_kinase"/>
</dbReference>
<dbReference type="InterPro" id="IPR015963">
    <property type="entry name" value="Uridylate_kinase_bac"/>
</dbReference>
<dbReference type="NCBIfam" id="TIGR02075">
    <property type="entry name" value="pyrH_bact"/>
    <property type="match status" value="1"/>
</dbReference>
<dbReference type="PANTHER" id="PTHR42833">
    <property type="entry name" value="URIDYLATE KINASE"/>
    <property type="match status" value="1"/>
</dbReference>
<dbReference type="PANTHER" id="PTHR42833:SF4">
    <property type="entry name" value="URIDYLATE KINASE PUMPKIN, CHLOROPLASTIC"/>
    <property type="match status" value="1"/>
</dbReference>
<dbReference type="Pfam" id="PF00696">
    <property type="entry name" value="AA_kinase"/>
    <property type="match status" value="1"/>
</dbReference>
<dbReference type="PIRSF" id="PIRSF005650">
    <property type="entry name" value="Uridylate_kin"/>
    <property type="match status" value="1"/>
</dbReference>
<dbReference type="SUPFAM" id="SSF53633">
    <property type="entry name" value="Carbamate kinase-like"/>
    <property type="match status" value="1"/>
</dbReference>
<protein>
    <recommendedName>
        <fullName evidence="1">Uridylate kinase</fullName>
        <shortName evidence="1">UK</shortName>
        <ecNumber evidence="1">2.7.4.22</ecNumber>
    </recommendedName>
    <alternativeName>
        <fullName evidence="1">Uridine monophosphate kinase</fullName>
        <shortName evidence="1">UMP kinase</shortName>
        <shortName evidence="1">UMPK</shortName>
    </alternativeName>
</protein>
<gene>
    <name evidence="1" type="primary">pyrH</name>
    <name type="ordered locus">Reut_A1879</name>
</gene>
<evidence type="ECO:0000255" key="1">
    <source>
        <dbReference type="HAMAP-Rule" id="MF_01220"/>
    </source>
</evidence>
<reference key="1">
    <citation type="journal article" date="2010" name="PLoS ONE">
        <title>The complete multipartite genome sequence of Cupriavidus necator JMP134, a versatile pollutant degrader.</title>
        <authorList>
            <person name="Lykidis A."/>
            <person name="Perez-Pantoja D."/>
            <person name="Ledger T."/>
            <person name="Mavromatis K."/>
            <person name="Anderson I.J."/>
            <person name="Ivanova N.N."/>
            <person name="Hooper S.D."/>
            <person name="Lapidus A."/>
            <person name="Lucas S."/>
            <person name="Gonzalez B."/>
            <person name="Kyrpides N.C."/>
        </authorList>
    </citation>
    <scope>NUCLEOTIDE SEQUENCE [LARGE SCALE GENOMIC DNA]</scope>
    <source>
        <strain>JMP134 / LMG 1197</strain>
    </source>
</reference>
<keyword id="KW-0067">ATP-binding</keyword>
<keyword id="KW-0963">Cytoplasm</keyword>
<keyword id="KW-0418">Kinase</keyword>
<keyword id="KW-0547">Nucleotide-binding</keyword>
<keyword id="KW-0665">Pyrimidine biosynthesis</keyword>
<keyword id="KW-0808">Transferase</keyword>